<comment type="function">
    <text evidence="1">Allows the formation of correctly charged Asn-tRNA(Asn) or Gln-tRNA(Gln) through the transamidation of misacylated Asp-tRNA(Asn) or Glu-tRNA(Gln) in organisms which lack either or both of asparaginyl-tRNA or glutaminyl-tRNA synthetases. The reaction takes place in the presence of glutamine and ATP through an activated phospho-Asp-tRNA(Asn) or phospho-Glu-tRNA(Gln).</text>
</comment>
<comment type="catalytic activity">
    <reaction evidence="1">
        <text>L-glutamyl-tRNA(Gln) + L-glutamine + ATP + H2O = L-glutaminyl-tRNA(Gln) + L-glutamate + ADP + phosphate + H(+)</text>
        <dbReference type="Rhea" id="RHEA:17521"/>
        <dbReference type="Rhea" id="RHEA-COMP:9681"/>
        <dbReference type="Rhea" id="RHEA-COMP:9684"/>
        <dbReference type="ChEBI" id="CHEBI:15377"/>
        <dbReference type="ChEBI" id="CHEBI:15378"/>
        <dbReference type="ChEBI" id="CHEBI:29985"/>
        <dbReference type="ChEBI" id="CHEBI:30616"/>
        <dbReference type="ChEBI" id="CHEBI:43474"/>
        <dbReference type="ChEBI" id="CHEBI:58359"/>
        <dbReference type="ChEBI" id="CHEBI:78520"/>
        <dbReference type="ChEBI" id="CHEBI:78521"/>
        <dbReference type="ChEBI" id="CHEBI:456216"/>
    </reaction>
</comment>
<comment type="catalytic activity">
    <reaction evidence="1">
        <text>L-aspartyl-tRNA(Asn) + L-glutamine + ATP + H2O = L-asparaginyl-tRNA(Asn) + L-glutamate + ADP + phosphate + 2 H(+)</text>
        <dbReference type="Rhea" id="RHEA:14513"/>
        <dbReference type="Rhea" id="RHEA-COMP:9674"/>
        <dbReference type="Rhea" id="RHEA-COMP:9677"/>
        <dbReference type="ChEBI" id="CHEBI:15377"/>
        <dbReference type="ChEBI" id="CHEBI:15378"/>
        <dbReference type="ChEBI" id="CHEBI:29985"/>
        <dbReference type="ChEBI" id="CHEBI:30616"/>
        <dbReference type="ChEBI" id="CHEBI:43474"/>
        <dbReference type="ChEBI" id="CHEBI:58359"/>
        <dbReference type="ChEBI" id="CHEBI:78515"/>
        <dbReference type="ChEBI" id="CHEBI:78516"/>
        <dbReference type="ChEBI" id="CHEBI:456216"/>
    </reaction>
</comment>
<comment type="subunit">
    <text evidence="1">Heterotrimer of A, B and C subunits.</text>
</comment>
<comment type="similarity">
    <text evidence="1">Belongs to the GatB/GatE family. GatB subfamily.</text>
</comment>
<feature type="chain" id="PRO_1000122503" description="Aspartyl/glutamyl-tRNA(Asn/Gln) amidotransferase subunit B">
    <location>
        <begin position="1"/>
        <end position="480"/>
    </location>
</feature>
<dbReference type="EC" id="6.3.5.-" evidence="1"/>
<dbReference type="EMBL" id="CP001393">
    <property type="protein sequence ID" value="ACM59877.1"/>
    <property type="molecule type" value="Genomic_DNA"/>
</dbReference>
<dbReference type="RefSeq" id="WP_015907315.1">
    <property type="nucleotide sequence ID" value="NC_012034.1"/>
</dbReference>
<dbReference type="SMR" id="B9MQ85"/>
<dbReference type="STRING" id="521460.Athe_0762"/>
<dbReference type="GeneID" id="31772117"/>
<dbReference type="KEGG" id="ate:Athe_0762"/>
<dbReference type="eggNOG" id="COG0064">
    <property type="taxonomic scope" value="Bacteria"/>
</dbReference>
<dbReference type="HOGENOM" id="CLU_019240_0_0_9"/>
<dbReference type="Proteomes" id="UP000007723">
    <property type="component" value="Chromosome"/>
</dbReference>
<dbReference type="GO" id="GO:0050566">
    <property type="term" value="F:asparaginyl-tRNA synthase (glutamine-hydrolyzing) activity"/>
    <property type="evidence" value="ECO:0007669"/>
    <property type="project" value="RHEA"/>
</dbReference>
<dbReference type="GO" id="GO:0005524">
    <property type="term" value="F:ATP binding"/>
    <property type="evidence" value="ECO:0007669"/>
    <property type="project" value="UniProtKB-KW"/>
</dbReference>
<dbReference type="GO" id="GO:0050567">
    <property type="term" value="F:glutaminyl-tRNA synthase (glutamine-hydrolyzing) activity"/>
    <property type="evidence" value="ECO:0007669"/>
    <property type="project" value="UniProtKB-UniRule"/>
</dbReference>
<dbReference type="GO" id="GO:0070681">
    <property type="term" value="P:glutaminyl-tRNAGln biosynthesis via transamidation"/>
    <property type="evidence" value="ECO:0007669"/>
    <property type="project" value="TreeGrafter"/>
</dbReference>
<dbReference type="GO" id="GO:0006412">
    <property type="term" value="P:translation"/>
    <property type="evidence" value="ECO:0007669"/>
    <property type="project" value="UniProtKB-UniRule"/>
</dbReference>
<dbReference type="FunFam" id="1.10.10.410:FF:000001">
    <property type="entry name" value="Aspartyl/glutamyl-tRNA(Asn/Gln) amidotransferase subunit B"/>
    <property type="match status" value="1"/>
</dbReference>
<dbReference type="FunFam" id="1.10.150.380:FF:000001">
    <property type="entry name" value="Aspartyl/glutamyl-tRNA(Asn/Gln) amidotransferase subunit B"/>
    <property type="match status" value="1"/>
</dbReference>
<dbReference type="Gene3D" id="1.10.10.410">
    <property type="match status" value="1"/>
</dbReference>
<dbReference type="Gene3D" id="1.10.150.380">
    <property type="entry name" value="GatB domain, N-terminal subdomain"/>
    <property type="match status" value="1"/>
</dbReference>
<dbReference type="HAMAP" id="MF_00121">
    <property type="entry name" value="GatB"/>
    <property type="match status" value="1"/>
</dbReference>
<dbReference type="InterPro" id="IPR017959">
    <property type="entry name" value="Asn/Gln-tRNA_amidoTrfase_suB/E"/>
</dbReference>
<dbReference type="InterPro" id="IPR006075">
    <property type="entry name" value="Asn/Gln-tRNA_Trfase_suB/E_cat"/>
</dbReference>
<dbReference type="InterPro" id="IPR018027">
    <property type="entry name" value="Asn/Gln_amidotransferase"/>
</dbReference>
<dbReference type="InterPro" id="IPR003789">
    <property type="entry name" value="Asn/Gln_tRNA_amidoTrase-B-like"/>
</dbReference>
<dbReference type="InterPro" id="IPR004413">
    <property type="entry name" value="GatB"/>
</dbReference>
<dbReference type="InterPro" id="IPR042114">
    <property type="entry name" value="GatB_C_1"/>
</dbReference>
<dbReference type="InterPro" id="IPR023168">
    <property type="entry name" value="GatB_Yqey_C_2"/>
</dbReference>
<dbReference type="InterPro" id="IPR017958">
    <property type="entry name" value="Gln-tRNA_amidoTrfase_suB_CS"/>
</dbReference>
<dbReference type="InterPro" id="IPR014746">
    <property type="entry name" value="Gln_synth/guanido_kin_cat_dom"/>
</dbReference>
<dbReference type="NCBIfam" id="TIGR00133">
    <property type="entry name" value="gatB"/>
    <property type="match status" value="1"/>
</dbReference>
<dbReference type="NCBIfam" id="NF004012">
    <property type="entry name" value="PRK05477.1-2"/>
    <property type="match status" value="1"/>
</dbReference>
<dbReference type="NCBIfam" id="NF004014">
    <property type="entry name" value="PRK05477.1-4"/>
    <property type="match status" value="1"/>
</dbReference>
<dbReference type="NCBIfam" id="NF004015">
    <property type="entry name" value="PRK05477.1-5"/>
    <property type="match status" value="1"/>
</dbReference>
<dbReference type="PANTHER" id="PTHR11659">
    <property type="entry name" value="GLUTAMYL-TRNA GLN AMIDOTRANSFERASE SUBUNIT B MITOCHONDRIAL AND PROKARYOTIC PET112-RELATED"/>
    <property type="match status" value="1"/>
</dbReference>
<dbReference type="PANTHER" id="PTHR11659:SF0">
    <property type="entry name" value="GLUTAMYL-TRNA(GLN) AMIDOTRANSFERASE SUBUNIT B, MITOCHONDRIAL"/>
    <property type="match status" value="1"/>
</dbReference>
<dbReference type="Pfam" id="PF02934">
    <property type="entry name" value="GatB_N"/>
    <property type="match status" value="1"/>
</dbReference>
<dbReference type="Pfam" id="PF02637">
    <property type="entry name" value="GatB_Yqey"/>
    <property type="match status" value="1"/>
</dbReference>
<dbReference type="SMART" id="SM00845">
    <property type="entry name" value="GatB_Yqey"/>
    <property type="match status" value="1"/>
</dbReference>
<dbReference type="SUPFAM" id="SSF89095">
    <property type="entry name" value="GatB/YqeY motif"/>
    <property type="match status" value="1"/>
</dbReference>
<dbReference type="SUPFAM" id="SSF55931">
    <property type="entry name" value="Glutamine synthetase/guanido kinase"/>
    <property type="match status" value="1"/>
</dbReference>
<dbReference type="PROSITE" id="PS01234">
    <property type="entry name" value="GATB"/>
    <property type="match status" value="1"/>
</dbReference>
<gene>
    <name evidence="1" type="primary">gatB</name>
    <name type="ordered locus">Athe_0762</name>
</gene>
<accession>B9MQ85</accession>
<proteinExistence type="inferred from homology"/>
<protein>
    <recommendedName>
        <fullName evidence="1">Aspartyl/glutamyl-tRNA(Asn/Gln) amidotransferase subunit B</fullName>
        <shortName evidence="1">Asp/Glu-ADT subunit B</shortName>
        <ecNumber evidence="1">6.3.5.-</ecNumber>
    </recommendedName>
</protein>
<sequence length="480" mass="54776">MEYEVVIGLEVHAELATKSKIFCSCTTEFGGEPNTHCCPICTGMPGVLPVLNKKAVEYAIMAGLATNCQIARYSKQDRKNYFYPDLPKAYQISQYDLPLCYNGYIDIEVNGQKKRIGIKRIHIEEDAGKLLHDQWEEGSLVDFNRCGVPLIEIVTEPDLRSSEETRIFLEKLKAILQYTEVSDCKMQEGSLRVDVNLSVRPKGSKEFGTRTEMKNLNSFRSVVRAIEYEARRQIEVLESGGVVVQETRRWDDPKGISLSMRTKEEAHDYRYFPEPDLPPIVVDDSWIEEIRKRIPELPDQKKERYIKEYGLPEYDAGVLTSSKAIANYFEECIKYTQNIKAASNWMMGEIMRILNDKGLEPEEINNIKIKPNQLASLINLVDNKTISNTIAKQVFEEMFETGKDPEVIVKEKGLVQITDRNVILEAVKQAIANNPKSVEDYKNGKDKAFGFLVGQVMKITKGKANPQLVNEILREELEKI</sequence>
<organism>
    <name type="scientific">Caldicellulosiruptor bescii (strain ATCC BAA-1888 / DSM 6725 / KCTC 15123 / Z-1320)</name>
    <name type="common">Anaerocellum thermophilum</name>
    <dbReference type="NCBI Taxonomy" id="521460"/>
    <lineage>
        <taxon>Bacteria</taxon>
        <taxon>Bacillati</taxon>
        <taxon>Bacillota</taxon>
        <taxon>Bacillota incertae sedis</taxon>
        <taxon>Caldicellulosiruptorales</taxon>
        <taxon>Caldicellulosiruptoraceae</taxon>
        <taxon>Caldicellulosiruptor</taxon>
    </lineage>
</organism>
<keyword id="KW-0067">ATP-binding</keyword>
<keyword id="KW-0436">Ligase</keyword>
<keyword id="KW-0547">Nucleotide-binding</keyword>
<keyword id="KW-0648">Protein biosynthesis</keyword>
<name>GATB_CALBD</name>
<evidence type="ECO:0000255" key="1">
    <source>
        <dbReference type="HAMAP-Rule" id="MF_00121"/>
    </source>
</evidence>
<reference key="1">
    <citation type="submission" date="2009-01" db="EMBL/GenBank/DDBJ databases">
        <title>Complete sequence of chromosome of Caldicellulosiruptor becscii DSM 6725.</title>
        <authorList>
            <person name="Lucas S."/>
            <person name="Copeland A."/>
            <person name="Lapidus A."/>
            <person name="Glavina del Rio T."/>
            <person name="Tice H."/>
            <person name="Bruce D."/>
            <person name="Goodwin L."/>
            <person name="Pitluck S."/>
            <person name="Sims D."/>
            <person name="Meincke L."/>
            <person name="Brettin T."/>
            <person name="Detter J.C."/>
            <person name="Han C."/>
            <person name="Larimer F."/>
            <person name="Land M."/>
            <person name="Hauser L."/>
            <person name="Kyrpides N."/>
            <person name="Ovchinnikova G."/>
            <person name="Kataeva I."/>
            <person name="Adams M.W.W."/>
        </authorList>
    </citation>
    <scope>NUCLEOTIDE SEQUENCE [LARGE SCALE GENOMIC DNA]</scope>
    <source>
        <strain>ATCC BAA-1888 / DSM 6725 / KCTC 15123 / Z-1320</strain>
    </source>
</reference>